<keyword id="KW-0067">ATP-binding</keyword>
<keyword id="KW-1003">Cell membrane</keyword>
<keyword id="KW-1015">Disulfide bond</keyword>
<keyword id="KW-0245">EGF-like domain</keyword>
<keyword id="KW-0325">Glycoprotein</keyword>
<keyword id="KW-0418">Kinase</keyword>
<keyword id="KW-0430">Lectin</keyword>
<keyword id="KW-0472">Membrane</keyword>
<keyword id="KW-0547">Nucleotide-binding</keyword>
<keyword id="KW-0597">Phosphoprotein</keyword>
<keyword id="KW-0675">Receptor</keyword>
<keyword id="KW-1185">Reference proteome</keyword>
<keyword id="KW-0723">Serine/threonine-protein kinase</keyword>
<keyword id="KW-0732">Signal</keyword>
<keyword id="KW-0808">Transferase</keyword>
<keyword id="KW-0812">Transmembrane</keyword>
<keyword id="KW-1133">Transmembrane helix</keyword>
<proteinExistence type="inferred from homology"/>
<name>RKS1_ARATH</name>
<protein>
    <recommendedName>
        <fullName>G-type lectin S-receptor-like serine/threonine-protein kinase RKS1</fullName>
        <ecNumber>2.7.11.1</ecNumber>
    </recommendedName>
    <alternativeName>
        <fullName>Receptor-like protein kinase 1</fullName>
    </alternativeName>
</protein>
<gene>
    <name type="primary">RKS1</name>
    <name type="ordered locus">At1g11340</name>
    <name type="ORF">T23J18.1</name>
    <name type="ORF">T28P6.1</name>
</gene>
<comment type="catalytic activity">
    <reaction>
        <text>L-seryl-[protein] + ATP = O-phospho-L-seryl-[protein] + ADP + H(+)</text>
        <dbReference type="Rhea" id="RHEA:17989"/>
        <dbReference type="Rhea" id="RHEA-COMP:9863"/>
        <dbReference type="Rhea" id="RHEA-COMP:11604"/>
        <dbReference type="ChEBI" id="CHEBI:15378"/>
        <dbReference type="ChEBI" id="CHEBI:29999"/>
        <dbReference type="ChEBI" id="CHEBI:30616"/>
        <dbReference type="ChEBI" id="CHEBI:83421"/>
        <dbReference type="ChEBI" id="CHEBI:456216"/>
        <dbReference type="EC" id="2.7.11.1"/>
    </reaction>
</comment>
<comment type="catalytic activity">
    <reaction>
        <text>L-threonyl-[protein] + ATP = O-phospho-L-threonyl-[protein] + ADP + H(+)</text>
        <dbReference type="Rhea" id="RHEA:46608"/>
        <dbReference type="Rhea" id="RHEA-COMP:11060"/>
        <dbReference type="Rhea" id="RHEA-COMP:11605"/>
        <dbReference type="ChEBI" id="CHEBI:15378"/>
        <dbReference type="ChEBI" id="CHEBI:30013"/>
        <dbReference type="ChEBI" id="CHEBI:30616"/>
        <dbReference type="ChEBI" id="CHEBI:61977"/>
        <dbReference type="ChEBI" id="CHEBI:456216"/>
        <dbReference type="EC" id="2.7.11.1"/>
    </reaction>
</comment>
<comment type="subcellular location">
    <subcellularLocation>
        <location evidence="1">Cell membrane</location>
        <topology evidence="1">Single-pass type I membrane protein</topology>
    </subcellularLocation>
</comment>
<comment type="similarity">
    <text evidence="6">Belongs to the protein kinase superfamily. Ser/Thr protein kinase family.</text>
</comment>
<comment type="sequence caution" evidence="9">
    <conflict type="erroneous gene model prediction">
        <sequence resource="EMBL-CDS" id="AAC95352"/>
    </conflict>
</comment>
<comment type="sequence caution" evidence="9">
    <conflict type="erroneous gene model prediction">
        <sequence resource="EMBL-CDS" id="AAD49988"/>
    </conflict>
</comment>
<comment type="sequence caution" evidence="9">
    <conflict type="erroneous gene model prediction">
        <sequence resource="EMBL-CDS" id="AAF16651"/>
    </conflict>
</comment>
<dbReference type="EC" id="2.7.11.1"/>
<dbReference type="EMBL" id="AF084035">
    <property type="protein sequence ID" value="AAC95352.1"/>
    <property type="status" value="ALT_SEQ"/>
    <property type="molecule type" value="Genomic_DNA"/>
</dbReference>
<dbReference type="EMBL" id="AC007259">
    <property type="protein sequence ID" value="AAD49988.1"/>
    <property type="status" value="ALT_SEQ"/>
    <property type="molecule type" value="Genomic_DNA"/>
</dbReference>
<dbReference type="EMBL" id="AC011661">
    <property type="protein sequence ID" value="AAF16651.1"/>
    <property type="status" value="ALT_SEQ"/>
    <property type="molecule type" value="Genomic_DNA"/>
</dbReference>
<dbReference type="EMBL" id="CP002684">
    <property type="protein sequence ID" value="AEE28720.2"/>
    <property type="molecule type" value="Genomic_DNA"/>
</dbReference>
<dbReference type="PIR" id="E86247">
    <property type="entry name" value="E86247"/>
</dbReference>
<dbReference type="RefSeq" id="NP_172601.3">
    <property type="nucleotide sequence ID" value="NM_101007.3"/>
</dbReference>
<dbReference type="SMR" id="Q9ZT07"/>
<dbReference type="FunCoup" id="Q9ZT07">
    <property type="interactions" value="8"/>
</dbReference>
<dbReference type="STRING" id="3702.Q9ZT07"/>
<dbReference type="TCDB" id="1.A.87.2.18">
    <property type="family name" value="the mechanosensitive calcium channel (mca) family"/>
</dbReference>
<dbReference type="GlyCosmos" id="Q9ZT07">
    <property type="glycosylation" value="8 sites, No reported glycans"/>
</dbReference>
<dbReference type="GlyGen" id="Q9ZT07">
    <property type="glycosylation" value="9 sites"/>
</dbReference>
<dbReference type="PaxDb" id="3702-AT1G11340.1"/>
<dbReference type="EnsemblPlants" id="AT1G11340.1">
    <property type="protein sequence ID" value="AT1G11340.1"/>
    <property type="gene ID" value="AT1G11340"/>
</dbReference>
<dbReference type="GeneID" id="837676"/>
<dbReference type="Gramene" id="AT1G11340.1">
    <property type="protein sequence ID" value="AT1G11340.1"/>
    <property type="gene ID" value="AT1G11340"/>
</dbReference>
<dbReference type="KEGG" id="ath:AT1G11340"/>
<dbReference type="Araport" id="AT1G11340"/>
<dbReference type="TAIR" id="AT1G11340"/>
<dbReference type="eggNOG" id="ENOG502QUDG">
    <property type="taxonomic scope" value="Eukaryota"/>
</dbReference>
<dbReference type="HOGENOM" id="CLU_000288_116_5_1"/>
<dbReference type="InParanoid" id="Q9ZT07"/>
<dbReference type="OMA" id="FEANTNC"/>
<dbReference type="PhylomeDB" id="Q9ZT07"/>
<dbReference type="PRO" id="PR:Q9ZT07"/>
<dbReference type="Proteomes" id="UP000006548">
    <property type="component" value="Chromosome 1"/>
</dbReference>
<dbReference type="ExpressionAtlas" id="Q9ZT07">
    <property type="expression patterns" value="baseline and differential"/>
</dbReference>
<dbReference type="GO" id="GO:0005886">
    <property type="term" value="C:plasma membrane"/>
    <property type="evidence" value="ECO:0007669"/>
    <property type="project" value="UniProtKB-SubCell"/>
</dbReference>
<dbReference type="GO" id="GO:0005524">
    <property type="term" value="F:ATP binding"/>
    <property type="evidence" value="ECO:0007669"/>
    <property type="project" value="UniProtKB-KW"/>
</dbReference>
<dbReference type="GO" id="GO:0005516">
    <property type="term" value="F:calmodulin binding"/>
    <property type="evidence" value="ECO:0000250"/>
    <property type="project" value="UniProtKB"/>
</dbReference>
<dbReference type="GO" id="GO:0030246">
    <property type="term" value="F:carbohydrate binding"/>
    <property type="evidence" value="ECO:0007669"/>
    <property type="project" value="UniProtKB-KW"/>
</dbReference>
<dbReference type="GO" id="GO:0106310">
    <property type="term" value="F:protein serine kinase activity"/>
    <property type="evidence" value="ECO:0007669"/>
    <property type="project" value="RHEA"/>
</dbReference>
<dbReference type="GO" id="GO:0004674">
    <property type="term" value="F:protein serine/threonine kinase activity"/>
    <property type="evidence" value="ECO:0000250"/>
    <property type="project" value="UniProtKB"/>
</dbReference>
<dbReference type="GO" id="GO:0031625">
    <property type="term" value="F:ubiquitin protein ligase binding"/>
    <property type="evidence" value="ECO:0007669"/>
    <property type="project" value="UniProtKB-ARBA"/>
</dbReference>
<dbReference type="GO" id="GO:0048544">
    <property type="term" value="P:recognition of pollen"/>
    <property type="evidence" value="ECO:0007669"/>
    <property type="project" value="InterPro"/>
</dbReference>
<dbReference type="CDD" id="cd00028">
    <property type="entry name" value="B_lectin"/>
    <property type="match status" value="1"/>
</dbReference>
<dbReference type="CDD" id="cd00054">
    <property type="entry name" value="EGF_CA"/>
    <property type="match status" value="1"/>
</dbReference>
<dbReference type="CDD" id="cd01098">
    <property type="entry name" value="PAN_AP_plant"/>
    <property type="match status" value="1"/>
</dbReference>
<dbReference type="CDD" id="cd14066">
    <property type="entry name" value="STKc_IRAK"/>
    <property type="match status" value="1"/>
</dbReference>
<dbReference type="FunFam" id="1.10.510.10:FF:000060">
    <property type="entry name" value="G-type lectin S-receptor-like serine/threonine-protein kinase"/>
    <property type="match status" value="1"/>
</dbReference>
<dbReference type="FunFam" id="2.90.10.10:FF:000005">
    <property type="entry name" value="G-type lectin S-receptor-like serine/threonine-protein kinase"/>
    <property type="match status" value="1"/>
</dbReference>
<dbReference type="FunFam" id="3.30.200.20:FF:000330">
    <property type="entry name" value="G-type lectin S-receptor-like serine/threonine-protein kinase At4g03230"/>
    <property type="match status" value="1"/>
</dbReference>
<dbReference type="Gene3D" id="2.90.10.10">
    <property type="entry name" value="Bulb-type lectin domain"/>
    <property type="match status" value="1"/>
</dbReference>
<dbReference type="Gene3D" id="3.30.200.20">
    <property type="entry name" value="Phosphorylase Kinase, domain 1"/>
    <property type="match status" value="1"/>
</dbReference>
<dbReference type="Gene3D" id="1.10.510.10">
    <property type="entry name" value="Transferase(Phosphotransferase) domain 1"/>
    <property type="match status" value="1"/>
</dbReference>
<dbReference type="InterPro" id="IPR001480">
    <property type="entry name" value="Bulb-type_lectin_dom"/>
</dbReference>
<dbReference type="InterPro" id="IPR036426">
    <property type="entry name" value="Bulb-type_lectin_dom_sf"/>
</dbReference>
<dbReference type="InterPro" id="IPR000742">
    <property type="entry name" value="EGF-like_dom"/>
</dbReference>
<dbReference type="InterPro" id="IPR011009">
    <property type="entry name" value="Kinase-like_dom_sf"/>
</dbReference>
<dbReference type="InterPro" id="IPR003609">
    <property type="entry name" value="Pan_app"/>
</dbReference>
<dbReference type="InterPro" id="IPR000719">
    <property type="entry name" value="Prot_kinase_dom"/>
</dbReference>
<dbReference type="InterPro" id="IPR000858">
    <property type="entry name" value="S_locus_glycoprot_dom"/>
</dbReference>
<dbReference type="InterPro" id="IPR001245">
    <property type="entry name" value="Ser-Thr/Tyr_kinase_cat_dom"/>
</dbReference>
<dbReference type="InterPro" id="IPR008271">
    <property type="entry name" value="Ser/Thr_kinase_AS"/>
</dbReference>
<dbReference type="InterPro" id="IPR024171">
    <property type="entry name" value="SRK-like_kinase"/>
</dbReference>
<dbReference type="PANTHER" id="PTHR27002:SF1095">
    <property type="entry name" value="G-TYPE LECTIN S-RECEPTOR-LIKE SERINE_THREONINE-PROTEIN KINASE RKS1"/>
    <property type="match status" value="1"/>
</dbReference>
<dbReference type="PANTHER" id="PTHR27002">
    <property type="entry name" value="RECEPTOR-LIKE SERINE/THREONINE-PROTEIN KINASE SD1-8"/>
    <property type="match status" value="1"/>
</dbReference>
<dbReference type="Pfam" id="PF01453">
    <property type="entry name" value="B_lectin"/>
    <property type="match status" value="1"/>
</dbReference>
<dbReference type="Pfam" id="PF08276">
    <property type="entry name" value="PAN_2"/>
    <property type="match status" value="1"/>
</dbReference>
<dbReference type="Pfam" id="PF07714">
    <property type="entry name" value="PK_Tyr_Ser-Thr"/>
    <property type="match status" value="1"/>
</dbReference>
<dbReference type="Pfam" id="PF00954">
    <property type="entry name" value="S_locus_glycop"/>
    <property type="match status" value="1"/>
</dbReference>
<dbReference type="PIRSF" id="PIRSF000641">
    <property type="entry name" value="SRK"/>
    <property type="match status" value="1"/>
</dbReference>
<dbReference type="SMART" id="SM00108">
    <property type="entry name" value="B_lectin"/>
    <property type="match status" value="1"/>
</dbReference>
<dbReference type="SMART" id="SM00473">
    <property type="entry name" value="PAN_AP"/>
    <property type="match status" value="1"/>
</dbReference>
<dbReference type="SMART" id="SM00220">
    <property type="entry name" value="S_TKc"/>
    <property type="match status" value="1"/>
</dbReference>
<dbReference type="SUPFAM" id="SSF51110">
    <property type="entry name" value="alpha-D-mannose-specific plant lectins"/>
    <property type="match status" value="1"/>
</dbReference>
<dbReference type="SUPFAM" id="SSF56112">
    <property type="entry name" value="Protein kinase-like (PK-like)"/>
    <property type="match status" value="1"/>
</dbReference>
<dbReference type="PROSITE" id="PS50927">
    <property type="entry name" value="BULB_LECTIN"/>
    <property type="match status" value="1"/>
</dbReference>
<dbReference type="PROSITE" id="PS50026">
    <property type="entry name" value="EGF_3"/>
    <property type="match status" value="1"/>
</dbReference>
<dbReference type="PROSITE" id="PS50948">
    <property type="entry name" value="PAN"/>
    <property type="match status" value="1"/>
</dbReference>
<dbReference type="PROSITE" id="PS50011">
    <property type="entry name" value="PROTEIN_KINASE_DOM"/>
    <property type="match status" value="1"/>
</dbReference>
<dbReference type="PROSITE" id="PS00108">
    <property type="entry name" value="PROTEIN_KINASE_ST"/>
    <property type="match status" value="1"/>
</dbReference>
<feature type="signal peptide" evidence="3">
    <location>
        <begin position="1"/>
        <end position="18"/>
    </location>
</feature>
<feature type="chain" id="PRO_0000401299" description="G-type lectin S-receptor-like serine/threonine-protein kinase RKS1">
    <location>
        <begin position="19"/>
        <end position="833"/>
    </location>
</feature>
<feature type="topological domain" description="Extracellular" evidence="3">
    <location>
        <begin position="19"/>
        <end position="440"/>
    </location>
</feature>
<feature type="transmembrane region" description="Helical" evidence="3">
    <location>
        <begin position="441"/>
        <end position="461"/>
    </location>
</feature>
<feature type="topological domain" description="Cytoplasmic" evidence="3">
    <location>
        <begin position="462"/>
        <end position="833"/>
    </location>
</feature>
<feature type="domain" description="Bulb-type lectin" evidence="4">
    <location>
        <begin position="19"/>
        <end position="144"/>
    </location>
</feature>
<feature type="domain" description="EGF-like" evidence="5">
    <location>
        <begin position="280"/>
        <end position="330"/>
    </location>
</feature>
<feature type="domain" description="PAN" evidence="7">
    <location>
        <begin position="338"/>
        <end position="421"/>
    </location>
</feature>
<feature type="domain" description="Protein kinase" evidence="6">
    <location>
        <begin position="515"/>
        <end position="800"/>
    </location>
</feature>
<feature type="region of interest" description="CaM-binding" evidence="1">
    <location>
        <begin position="604"/>
        <end position="621"/>
    </location>
</feature>
<feature type="active site" description="Proton acceptor" evidence="6 8">
    <location>
        <position position="640"/>
    </location>
</feature>
<feature type="binding site" evidence="6">
    <location>
        <begin position="521"/>
        <end position="529"/>
    </location>
    <ligand>
        <name>ATP</name>
        <dbReference type="ChEBI" id="CHEBI:30616"/>
    </ligand>
</feature>
<feature type="binding site" evidence="6">
    <location>
        <position position="543"/>
    </location>
    <ligand>
        <name>ATP</name>
        <dbReference type="ChEBI" id="CHEBI:30616"/>
    </ligand>
</feature>
<feature type="modified residue" description="Phosphoserine" evidence="2">
    <location>
        <position position="549"/>
    </location>
</feature>
<feature type="modified residue" description="Phosphoserine" evidence="2">
    <location>
        <position position="564"/>
    </location>
</feature>
<feature type="modified residue" description="Phosphoserine" evidence="2">
    <location>
        <position position="644"/>
    </location>
</feature>
<feature type="modified residue" description="Phosphoserine" evidence="2">
    <location>
        <position position="657"/>
    </location>
</feature>
<feature type="modified residue" description="Phosphothreonine" evidence="2">
    <location>
        <position position="674"/>
    </location>
</feature>
<feature type="modified residue" description="Phosphoserine" evidence="2">
    <location>
        <position position="717"/>
    </location>
</feature>
<feature type="modified residue" description="Phosphoserine" evidence="2">
    <location>
        <position position="821"/>
    </location>
</feature>
<feature type="glycosylation site" description="N-linked (GlcNAc...) asparagine" evidence="3">
    <location>
        <position position="79"/>
    </location>
</feature>
<feature type="glycosylation site" description="N-linked (GlcNAc...) asparagine" evidence="3">
    <location>
        <position position="92"/>
    </location>
</feature>
<feature type="glycosylation site" description="N-linked (GlcNAc...) asparagine" evidence="3">
    <location>
        <position position="100"/>
    </location>
</feature>
<feature type="glycosylation site" description="N-linked (GlcNAc...) asparagine" evidence="3">
    <location>
        <position position="109"/>
    </location>
</feature>
<feature type="glycosylation site" description="N-linked (GlcNAc...) asparagine" evidence="3">
    <location>
        <position position="228"/>
    </location>
</feature>
<feature type="glycosylation site" description="N-linked (GlcNAc...) asparagine" evidence="3">
    <location>
        <position position="256"/>
    </location>
</feature>
<feature type="glycosylation site" description="N-linked (GlcNAc...) asparagine" evidence="3">
    <location>
        <position position="363"/>
    </location>
</feature>
<feature type="glycosylation site" description="N-linked (GlcNAc...) asparagine" evidence="3">
    <location>
        <position position="376"/>
    </location>
</feature>
<feature type="disulfide bond" evidence="5">
    <location>
        <begin position="284"/>
        <end position="296"/>
    </location>
</feature>
<feature type="disulfide bond" evidence="5">
    <location>
        <begin position="290"/>
        <end position="306"/>
    </location>
</feature>
<feature type="disulfide bond" evidence="5">
    <location>
        <begin position="308"/>
        <end position="329"/>
    </location>
</feature>
<feature type="disulfide bond" evidence="7">
    <location>
        <begin position="369"/>
        <end position="396"/>
    </location>
</feature>
<feature type="disulfide bond" evidence="7">
    <location>
        <begin position="373"/>
        <end position="379"/>
    </location>
</feature>
<organism>
    <name type="scientific">Arabidopsis thaliana</name>
    <name type="common">Mouse-ear cress</name>
    <dbReference type="NCBI Taxonomy" id="3702"/>
    <lineage>
        <taxon>Eukaryota</taxon>
        <taxon>Viridiplantae</taxon>
        <taxon>Streptophyta</taxon>
        <taxon>Embryophyta</taxon>
        <taxon>Tracheophyta</taxon>
        <taxon>Spermatophyta</taxon>
        <taxon>Magnoliopsida</taxon>
        <taxon>eudicotyledons</taxon>
        <taxon>Gunneridae</taxon>
        <taxon>Pentapetalae</taxon>
        <taxon>rosids</taxon>
        <taxon>malvids</taxon>
        <taxon>Brassicales</taxon>
        <taxon>Brassicaceae</taxon>
        <taxon>Camelineae</taxon>
        <taxon>Arabidopsis</taxon>
    </lineage>
</organism>
<accession>Q9ZT07</accession>
<accession>F4I8U7</accession>
<accession>Q9LQ00</accession>
<accession>Q9SXB9</accession>
<evidence type="ECO:0000250" key="1"/>
<evidence type="ECO:0000250" key="2">
    <source>
        <dbReference type="UniProtKB" id="Q9LPZ9"/>
    </source>
</evidence>
<evidence type="ECO:0000255" key="3"/>
<evidence type="ECO:0000255" key="4">
    <source>
        <dbReference type="PROSITE-ProRule" id="PRU00038"/>
    </source>
</evidence>
<evidence type="ECO:0000255" key="5">
    <source>
        <dbReference type="PROSITE-ProRule" id="PRU00076"/>
    </source>
</evidence>
<evidence type="ECO:0000255" key="6">
    <source>
        <dbReference type="PROSITE-ProRule" id="PRU00159"/>
    </source>
</evidence>
<evidence type="ECO:0000255" key="7">
    <source>
        <dbReference type="PROSITE-ProRule" id="PRU00315"/>
    </source>
</evidence>
<evidence type="ECO:0000255" key="8">
    <source>
        <dbReference type="PROSITE-ProRule" id="PRU10027"/>
    </source>
</evidence>
<evidence type="ECO:0000305" key="9"/>
<reference key="1">
    <citation type="journal article" date="2000" name="Plant Cell Physiol.">
        <title>Salicylic acid induces the expression of a number of receptor-like kinase genes in Arabidopsis thaliana.</title>
        <authorList>
            <person name="Ohtake Y."/>
            <person name="Takahashi T."/>
            <person name="Komeda Y."/>
        </authorList>
    </citation>
    <scope>NUCLEOTIDE SEQUENCE [GENOMIC DNA]</scope>
    <source>
        <strain>cv. Columbia</strain>
    </source>
</reference>
<reference key="2">
    <citation type="journal article" date="2000" name="Nature">
        <title>Sequence and analysis of chromosome 1 of the plant Arabidopsis thaliana.</title>
        <authorList>
            <person name="Theologis A."/>
            <person name="Ecker J.R."/>
            <person name="Palm C.J."/>
            <person name="Federspiel N.A."/>
            <person name="Kaul S."/>
            <person name="White O."/>
            <person name="Alonso J."/>
            <person name="Altafi H."/>
            <person name="Araujo R."/>
            <person name="Bowman C.L."/>
            <person name="Brooks S.Y."/>
            <person name="Buehler E."/>
            <person name="Chan A."/>
            <person name="Chao Q."/>
            <person name="Chen H."/>
            <person name="Cheuk R.F."/>
            <person name="Chin C.W."/>
            <person name="Chung M.K."/>
            <person name="Conn L."/>
            <person name="Conway A.B."/>
            <person name="Conway A.R."/>
            <person name="Creasy T.H."/>
            <person name="Dewar K."/>
            <person name="Dunn P."/>
            <person name="Etgu P."/>
            <person name="Feldblyum T.V."/>
            <person name="Feng J.-D."/>
            <person name="Fong B."/>
            <person name="Fujii C.Y."/>
            <person name="Gill J.E."/>
            <person name="Goldsmith A.D."/>
            <person name="Haas B."/>
            <person name="Hansen N.F."/>
            <person name="Hughes B."/>
            <person name="Huizar L."/>
            <person name="Hunter J.L."/>
            <person name="Jenkins J."/>
            <person name="Johnson-Hopson C."/>
            <person name="Khan S."/>
            <person name="Khaykin E."/>
            <person name="Kim C.J."/>
            <person name="Koo H.L."/>
            <person name="Kremenetskaia I."/>
            <person name="Kurtz D.B."/>
            <person name="Kwan A."/>
            <person name="Lam B."/>
            <person name="Langin-Hooper S."/>
            <person name="Lee A."/>
            <person name="Lee J.M."/>
            <person name="Lenz C.A."/>
            <person name="Li J.H."/>
            <person name="Li Y.-P."/>
            <person name="Lin X."/>
            <person name="Liu S.X."/>
            <person name="Liu Z.A."/>
            <person name="Luros J.S."/>
            <person name="Maiti R."/>
            <person name="Marziali A."/>
            <person name="Militscher J."/>
            <person name="Miranda M."/>
            <person name="Nguyen M."/>
            <person name="Nierman W.C."/>
            <person name="Osborne B.I."/>
            <person name="Pai G."/>
            <person name="Peterson J."/>
            <person name="Pham P.K."/>
            <person name="Rizzo M."/>
            <person name="Rooney T."/>
            <person name="Rowley D."/>
            <person name="Sakano H."/>
            <person name="Salzberg S.L."/>
            <person name="Schwartz J.R."/>
            <person name="Shinn P."/>
            <person name="Southwick A.M."/>
            <person name="Sun H."/>
            <person name="Tallon L.J."/>
            <person name="Tambunga G."/>
            <person name="Toriumi M.J."/>
            <person name="Town C.D."/>
            <person name="Utterback T."/>
            <person name="Van Aken S."/>
            <person name="Vaysberg M."/>
            <person name="Vysotskaia V.S."/>
            <person name="Walker M."/>
            <person name="Wu D."/>
            <person name="Yu G."/>
            <person name="Fraser C.M."/>
            <person name="Venter J.C."/>
            <person name="Davis R.W."/>
        </authorList>
    </citation>
    <scope>NUCLEOTIDE SEQUENCE [LARGE SCALE GENOMIC DNA]</scope>
    <source>
        <strain>cv. Columbia</strain>
    </source>
</reference>
<reference key="3">
    <citation type="journal article" date="2017" name="Plant J.">
        <title>Araport11: a complete reannotation of the Arabidopsis thaliana reference genome.</title>
        <authorList>
            <person name="Cheng C.Y."/>
            <person name="Krishnakumar V."/>
            <person name="Chan A.P."/>
            <person name="Thibaud-Nissen F."/>
            <person name="Schobel S."/>
            <person name="Town C.D."/>
        </authorList>
    </citation>
    <scope>GENOME REANNOTATION</scope>
    <source>
        <strain>cv. Columbia</strain>
    </source>
</reference>
<sequence>MKVVFVIFFFFLFQFCISVDTIMRRQSLRDGEVILSAGKRFAFGFFSLGDSELRYVGIWYAQISQQTIVWVANRDHPINDTSGMVKFSNRGNLSVYASDNETELIWSTNVSDSMLEPTLVATLSDLGNLVLFDPVTGRSFWESFDHPTDTFLPFMRLGFTRKDGLDRSLTSWKSHGDPGSGDLILRMERRGFPQLILYKGVTPWWRMGSWTGHRWSGVPEMPIGYIFNNSFVNNEDEVSFTYGVTDASVITRTMVNETGTMHRFTWIARDKRWNDFWSVPKEQCDNYAHCGPNGYCDSPSSKTFECTCLPGFEPKFPRHWFLRDSSGGCTKKKRASICSEKDGFVKLKRMKIPDTSDASVDMNITLKECKQRCLKNCSCVAYASAYHESKRGAIGCLKWHGGMLDARTYLNSGQDFYIRVDKEELARWNRNGLSGKRRVLLILISLIAAVMLLTVILFCVVRERRKSNRHRSSSANFAPVPFDFDESFRFEQDKARNRELPLFDLNTIVAATNNFSSQNKLGAGGFGPVYKGVLQNRMEIAVKRLSRNSGQGMEEFKNEVKLISKLQHRNLVRILGCCVELEEKMLVYEYLPNKSLDYFIFHEEQRAELDWPKRMEIVRGIARGILYLHQDSRLRIIHRDLKASNILLDSEMIPKISDFGMARIFGGNQMEGCTSRVVGTFGYMAPEYAMEGQFSIKSDVYSFGVLMLEIITGKKNSAFHEESSNLVGHIWDLWENGEATEIIDNLMDQETYDEREVMKCIQIGLLCVQENASDRVDMSSVVIMLGHNATNLPNPKHPAFTSARRRGGENGACLKGQTGISVNDVTFSDIQGR</sequence>